<organism>
    <name type="scientific">Thermus thermophilus (strain ATCC BAA-163 / DSM 7039 / HB27)</name>
    <dbReference type="NCBI Taxonomy" id="262724"/>
    <lineage>
        <taxon>Bacteria</taxon>
        <taxon>Thermotogati</taxon>
        <taxon>Deinococcota</taxon>
        <taxon>Deinococci</taxon>
        <taxon>Thermales</taxon>
        <taxon>Thermaceae</taxon>
        <taxon>Thermus</taxon>
    </lineage>
</organism>
<evidence type="ECO:0000255" key="1">
    <source>
        <dbReference type="HAMAP-Rule" id="MF_00061"/>
    </source>
</evidence>
<dbReference type="EC" id="2.7.1.148" evidence="1"/>
<dbReference type="EMBL" id="AE017221">
    <property type="protein sequence ID" value="AAS82158.1"/>
    <property type="molecule type" value="Genomic_DNA"/>
</dbReference>
<dbReference type="RefSeq" id="WP_011174171.1">
    <property type="nucleotide sequence ID" value="NC_005835.1"/>
</dbReference>
<dbReference type="SMR" id="Q72GN2"/>
<dbReference type="GeneID" id="3169608"/>
<dbReference type="KEGG" id="tth:TT_C1816"/>
<dbReference type="eggNOG" id="COG1947">
    <property type="taxonomic scope" value="Bacteria"/>
</dbReference>
<dbReference type="HOGENOM" id="CLU_053057_1_1_0"/>
<dbReference type="OrthoDB" id="9809438at2"/>
<dbReference type="UniPathway" id="UPA00056">
    <property type="reaction ID" value="UER00094"/>
</dbReference>
<dbReference type="Proteomes" id="UP000000592">
    <property type="component" value="Chromosome"/>
</dbReference>
<dbReference type="GO" id="GO:0050515">
    <property type="term" value="F:4-(cytidine 5'-diphospho)-2-C-methyl-D-erythritol kinase activity"/>
    <property type="evidence" value="ECO:0007669"/>
    <property type="project" value="UniProtKB-UniRule"/>
</dbReference>
<dbReference type="GO" id="GO:0005524">
    <property type="term" value="F:ATP binding"/>
    <property type="evidence" value="ECO:0007669"/>
    <property type="project" value="UniProtKB-UniRule"/>
</dbReference>
<dbReference type="GO" id="GO:0019288">
    <property type="term" value="P:isopentenyl diphosphate biosynthetic process, methylerythritol 4-phosphate pathway"/>
    <property type="evidence" value="ECO:0007669"/>
    <property type="project" value="UniProtKB-UniRule"/>
</dbReference>
<dbReference type="GO" id="GO:0016114">
    <property type="term" value="P:terpenoid biosynthetic process"/>
    <property type="evidence" value="ECO:0007669"/>
    <property type="project" value="InterPro"/>
</dbReference>
<dbReference type="Gene3D" id="3.30.230.10">
    <property type="match status" value="1"/>
</dbReference>
<dbReference type="Gene3D" id="3.30.70.890">
    <property type="entry name" value="GHMP kinase, C-terminal domain"/>
    <property type="match status" value="1"/>
</dbReference>
<dbReference type="HAMAP" id="MF_00061">
    <property type="entry name" value="IspE"/>
    <property type="match status" value="1"/>
</dbReference>
<dbReference type="InterPro" id="IPR013750">
    <property type="entry name" value="GHMP_kinase_C_dom"/>
</dbReference>
<dbReference type="InterPro" id="IPR036554">
    <property type="entry name" value="GHMP_kinase_C_sf"/>
</dbReference>
<dbReference type="InterPro" id="IPR006204">
    <property type="entry name" value="GHMP_kinase_N_dom"/>
</dbReference>
<dbReference type="InterPro" id="IPR004424">
    <property type="entry name" value="IspE"/>
</dbReference>
<dbReference type="InterPro" id="IPR020568">
    <property type="entry name" value="Ribosomal_Su5_D2-typ_SF"/>
</dbReference>
<dbReference type="InterPro" id="IPR014721">
    <property type="entry name" value="Ribsml_uS5_D2-typ_fold_subgr"/>
</dbReference>
<dbReference type="NCBIfam" id="TIGR00154">
    <property type="entry name" value="ispE"/>
    <property type="match status" value="1"/>
</dbReference>
<dbReference type="PANTHER" id="PTHR43527">
    <property type="entry name" value="4-DIPHOSPHOCYTIDYL-2-C-METHYL-D-ERYTHRITOL KINASE, CHLOROPLASTIC"/>
    <property type="match status" value="1"/>
</dbReference>
<dbReference type="PANTHER" id="PTHR43527:SF2">
    <property type="entry name" value="4-DIPHOSPHOCYTIDYL-2-C-METHYL-D-ERYTHRITOL KINASE, CHLOROPLASTIC"/>
    <property type="match status" value="1"/>
</dbReference>
<dbReference type="Pfam" id="PF08544">
    <property type="entry name" value="GHMP_kinases_C"/>
    <property type="match status" value="1"/>
</dbReference>
<dbReference type="Pfam" id="PF00288">
    <property type="entry name" value="GHMP_kinases_N"/>
    <property type="match status" value="1"/>
</dbReference>
<dbReference type="PIRSF" id="PIRSF010376">
    <property type="entry name" value="IspE"/>
    <property type="match status" value="1"/>
</dbReference>
<dbReference type="SUPFAM" id="SSF55060">
    <property type="entry name" value="GHMP Kinase, C-terminal domain"/>
    <property type="match status" value="1"/>
</dbReference>
<dbReference type="SUPFAM" id="SSF54211">
    <property type="entry name" value="Ribosomal protein S5 domain 2-like"/>
    <property type="match status" value="1"/>
</dbReference>
<sequence length="275" mass="29253">MERLAPAKVNLGLSVRFRREDGYHELHTLFAPFSLADRLVVEPVSSGLHFQGPYGRENLAYRAASLYLEAAGQPGGVRILLEKRIPEGAGLGGGSSDAAQVLLALQALYPAEVDLFALARTLGADVPFFLLGRGAEARGVGERLKPLALPPVPAVVFFPGLRVPTPLVYRAVRPEDFGPDLPVEAILEALARGEEPPYWNSLEGPAFRLFPELKEVRGRMRALGLRGVLMSGSGSAFFGLAEGPDHARRAAEALRAWGRAWAGTLGGGDAGSGPA</sequence>
<feature type="chain" id="PRO_0000189278" description="4-diphosphocytidyl-2-C-methyl-D-erythritol kinase">
    <location>
        <begin position="1"/>
        <end position="275"/>
    </location>
</feature>
<feature type="active site" evidence="1">
    <location>
        <position position="8"/>
    </location>
</feature>
<feature type="active site" evidence="1">
    <location>
        <position position="125"/>
    </location>
</feature>
<feature type="binding site" evidence="1">
    <location>
        <begin position="86"/>
        <end position="96"/>
    </location>
    <ligand>
        <name>ATP</name>
        <dbReference type="ChEBI" id="CHEBI:30616"/>
    </ligand>
</feature>
<proteinExistence type="inferred from homology"/>
<accession>Q72GN2</accession>
<reference key="1">
    <citation type="journal article" date="2004" name="Nat. Biotechnol.">
        <title>The genome sequence of the extreme thermophile Thermus thermophilus.</title>
        <authorList>
            <person name="Henne A."/>
            <person name="Brueggemann H."/>
            <person name="Raasch C."/>
            <person name="Wiezer A."/>
            <person name="Hartsch T."/>
            <person name="Liesegang H."/>
            <person name="Johann A."/>
            <person name="Lienard T."/>
            <person name="Gohl O."/>
            <person name="Martinez-Arias R."/>
            <person name="Jacobi C."/>
            <person name="Starkuviene V."/>
            <person name="Schlenczeck S."/>
            <person name="Dencker S."/>
            <person name="Huber R."/>
            <person name="Klenk H.-P."/>
            <person name="Kramer W."/>
            <person name="Merkl R."/>
            <person name="Gottschalk G."/>
            <person name="Fritz H.-J."/>
        </authorList>
    </citation>
    <scope>NUCLEOTIDE SEQUENCE [LARGE SCALE GENOMIC DNA]</scope>
    <source>
        <strain>ATCC BAA-163 / DSM 7039 / HB27</strain>
    </source>
</reference>
<protein>
    <recommendedName>
        <fullName evidence="1">4-diphosphocytidyl-2-C-methyl-D-erythritol kinase</fullName>
        <shortName evidence="1">CMK</shortName>
        <ecNumber evidence="1">2.7.1.148</ecNumber>
    </recommendedName>
    <alternativeName>
        <fullName evidence="1">4-(cytidine-5'-diphospho)-2-C-methyl-D-erythritol kinase</fullName>
    </alternativeName>
</protein>
<name>ISPE_THET2</name>
<keyword id="KW-0067">ATP-binding</keyword>
<keyword id="KW-0414">Isoprene biosynthesis</keyword>
<keyword id="KW-0418">Kinase</keyword>
<keyword id="KW-0547">Nucleotide-binding</keyword>
<keyword id="KW-0808">Transferase</keyword>
<gene>
    <name evidence="1" type="primary">ispE</name>
    <name type="ordered locus">TT_C1816</name>
</gene>
<comment type="function">
    <text evidence="1">Catalyzes the phosphorylation of the position 2 hydroxy group of 4-diphosphocytidyl-2C-methyl-D-erythritol.</text>
</comment>
<comment type="catalytic activity">
    <reaction evidence="1">
        <text>4-CDP-2-C-methyl-D-erythritol + ATP = 4-CDP-2-C-methyl-D-erythritol 2-phosphate + ADP + H(+)</text>
        <dbReference type="Rhea" id="RHEA:18437"/>
        <dbReference type="ChEBI" id="CHEBI:15378"/>
        <dbReference type="ChEBI" id="CHEBI:30616"/>
        <dbReference type="ChEBI" id="CHEBI:57823"/>
        <dbReference type="ChEBI" id="CHEBI:57919"/>
        <dbReference type="ChEBI" id="CHEBI:456216"/>
        <dbReference type="EC" id="2.7.1.148"/>
    </reaction>
</comment>
<comment type="pathway">
    <text evidence="1">Isoprenoid biosynthesis; isopentenyl diphosphate biosynthesis via DXP pathway; isopentenyl diphosphate from 1-deoxy-D-xylulose 5-phosphate: step 3/6.</text>
</comment>
<comment type="similarity">
    <text evidence="1">Belongs to the GHMP kinase family. IspE subfamily.</text>
</comment>